<name>PLSX_AKKM8</name>
<comment type="function">
    <text evidence="1">Catalyzes the reversible formation of acyl-phosphate (acyl-PO(4)) from acyl-[acyl-carrier-protein] (acyl-ACP). This enzyme utilizes acyl-ACP as fatty acyl donor, but not acyl-CoA.</text>
</comment>
<comment type="catalytic activity">
    <reaction evidence="1">
        <text>a fatty acyl-[ACP] + phosphate = an acyl phosphate + holo-[ACP]</text>
        <dbReference type="Rhea" id="RHEA:42292"/>
        <dbReference type="Rhea" id="RHEA-COMP:9685"/>
        <dbReference type="Rhea" id="RHEA-COMP:14125"/>
        <dbReference type="ChEBI" id="CHEBI:43474"/>
        <dbReference type="ChEBI" id="CHEBI:59918"/>
        <dbReference type="ChEBI" id="CHEBI:64479"/>
        <dbReference type="ChEBI" id="CHEBI:138651"/>
        <dbReference type="EC" id="2.3.1.274"/>
    </reaction>
</comment>
<comment type="pathway">
    <text evidence="1">Lipid metabolism; phospholipid metabolism.</text>
</comment>
<comment type="subunit">
    <text evidence="1">Homodimer. Probably interacts with PlsY.</text>
</comment>
<comment type="subcellular location">
    <subcellularLocation>
        <location evidence="1">Cytoplasm</location>
    </subcellularLocation>
    <text evidence="1">Associated with the membrane possibly through PlsY.</text>
</comment>
<comment type="similarity">
    <text evidence="1">Belongs to the PlsX family.</text>
</comment>
<accession>B2UMF9</accession>
<organism>
    <name type="scientific">Akkermansia muciniphila (strain ATCC BAA-835 / DSM 22959 / JCM 33894 / BCRC 81048 / CCUG 64013 / CIP 107961 / Muc)</name>
    <dbReference type="NCBI Taxonomy" id="349741"/>
    <lineage>
        <taxon>Bacteria</taxon>
        <taxon>Pseudomonadati</taxon>
        <taxon>Verrucomicrobiota</taxon>
        <taxon>Verrucomicrobiia</taxon>
        <taxon>Verrucomicrobiales</taxon>
        <taxon>Akkermansiaceae</taxon>
        <taxon>Akkermansia</taxon>
    </lineage>
</organism>
<evidence type="ECO:0000255" key="1">
    <source>
        <dbReference type="HAMAP-Rule" id="MF_00019"/>
    </source>
</evidence>
<protein>
    <recommendedName>
        <fullName evidence="1">Phosphate acyltransferase</fullName>
        <ecNumber evidence="1">2.3.1.274</ecNumber>
    </recommendedName>
    <alternativeName>
        <fullName evidence="1">Acyl-ACP phosphotransacylase</fullName>
    </alternativeName>
    <alternativeName>
        <fullName evidence="1">Acyl-[acyl-carrier-protein]--phosphate acyltransferase</fullName>
    </alternativeName>
    <alternativeName>
        <fullName evidence="1">Phosphate-acyl-ACP acyltransferase</fullName>
    </alternativeName>
</protein>
<proteinExistence type="inferred from homology"/>
<gene>
    <name evidence="1" type="primary">plsX</name>
    <name type="ordered locus">Amuc_0265</name>
</gene>
<keyword id="KW-0963">Cytoplasm</keyword>
<keyword id="KW-0444">Lipid biosynthesis</keyword>
<keyword id="KW-0443">Lipid metabolism</keyword>
<keyword id="KW-0594">Phospholipid biosynthesis</keyword>
<keyword id="KW-1208">Phospholipid metabolism</keyword>
<keyword id="KW-1185">Reference proteome</keyword>
<keyword id="KW-0808">Transferase</keyword>
<dbReference type="EC" id="2.3.1.274" evidence="1"/>
<dbReference type="EMBL" id="CP001071">
    <property type="protein sequence ID" value="ACD04108.1"/>
    <property type="molecule type" value="Genomic_DNA"/>
</dbReference>
<dbReference type="RefSeq" id="WP_012419323.1">
    <property type="nucleotide sequence ID" value="NZ_CP071807.1"/>
</dbReference>
<dbReference type="SMR" id="B2UMF9"/>
<dbReference type="STRING" id="349741.Amuc_0265"/>
<dbReference type="PaxDb" id="349741-Amuc_0265"/>
<dbReference type="GeneID" id="60879743"/>
<dbReference type="KEGG" id="amu:Amuc_0265"/>
<dbReference type="eggNOG" id="COG0416">
    <property type="taxonomic scope" value="Bacteria"/>
</dbReference>
<dbReference type="HOGENOM" id="CLU_039379_1_1_0"/>
<dbReference type="OrthoDB" id="9806408at2"/>
<dbReference type="BioCyc" id="AMUC349741:G1GBX-303-MONOMER"/>
<dbReference type="UniPathway" id="UPA00085"/>
<dbReference type="Proteomes" id="UP000001031">
    <property type="component" value="Chromosome"/>
</dbReference>
<dbReference type="GO" id="GO:0005737">
    <property type="term" value="C:cytoplasm"/>
    <property type="evidence" value="ECO:0007669"/>
    <property type="project" value="UniProtKB-SubCell"/>
</dbReference>
<dbReference type="GO" id="GO:0043811">
    <property type="term" value="F:phosphate:acyl-[acyl carrier protein] acyltransferase activity"/>
    <property type="evidence" value="ECO:0007669"/>
    <property type="project" value="UniProtKB-UniRule"/>
</dbReference>
<dbReference type="GO" id="GO:0006633">
    <property type="term" value="P:fatty acid biosynthetic process"/>
    <property type="evidence" value="ECO:0007669"/>
    <property type="project" value="UniProtKB-UniRule"/>
</dbReference>
<dbReference type="GO" id="GO:0008654">
    <property type="term" value="P:phospholipid biosynthetic process"/>
    <property type="evidence" value="ECO:0007669"/>
    <property type="project" value="UniProtKB-KW"/>
</dbReference>
<dbReference type="Gene3D" id="3.40.718.10">
    <property type="entry name" value="Isopropylmalate Dehydrogenase"/>
    <property type="match status" value="1"/>
</dbReference>
<dbReference type="HAMAP" id="MF_00019">
    <property type="entry name" value="PlsX"/>
    <property type="match status" value="1"/>
</dbReference>
<dbReference type="InterPro" id="IPR003664">
    <property type="entry name" value="FA_synthesis"/>
</dbReference>
<dbReference type="InterPro" id="IPR012281">
    <property type="entry name" value="Phospholipid_synth_PlsX-like"/>
</dbReference>
<dbReference type="NCBIfam" id="TIGR00182">
    <property type="entry name" value="plsX"/>
    <property type="match status" value="1"/>
</dbReference>
<dbReference type="PANTHER" id="PTHR30100">
    <property type="entry name" value="FATTY ACID/PHOSPHOLIPID SYNTHESIS PROTEIN PLSX"/>
    <property type="match status" value="1"/>
</dbReference>
<dbReference type="PANTHER" id="PTHR30100:SF1">
    <property type="entry name" value="PHOSPHATE ACYLTRANSFERASE"/>
    <property type="match status" value="1"/>
</dbReference>
<dbReference type="Pfam" id="PF02504">
    <property type="entry name" value="FA_synthesis"/>
    <property type="match status" value="1"/>
</dbReference>
<dbReference type="PIRSF" id="PIRSF002465">
    <property type="entry name" value="Phsphlp_syn_PlsX"/>
    <property type="match status" value="1"/>
</dbReference>
<dbReference type="SUPFAM" id="SSF53659">
    <property type="entry name" value="Isocitrate/Isopropylmalate dehydrogenase-like"/>
    <property type="match status" value="1"/>
</dbReference>
<reference key="1">
    <citation type="journal article" date="2011" name="PLoS ONE">
        <title>The genome of Akkermansia muciniphila, a dedicated intestinal mucin degrader, and its use in exploring intestinal metagenomes.</title>
        <authorList>
            <person name="van Passel M.W."/>
            <person name="Kant R."/>
            <person name="Zoetendal E.G."/>
            <person name="Plugge C.M."/>
            <person name="Derrien M."/>
            <person name="Malfatti S.A."/>
            <person name="Chain P.S."/>
            <person name="Woyke T."/>
            <person name="Palva A."/>
            <person name="de Vos W.M."/>
            <person name="Smidt H."/>
        </authorList>
    </citation>
    <scope>NUCLEOTIDE SEQUENCE [LARGE SCALE GENOMIC DNA]</scope>
    <source>
        <strain>ATCC BAA-835 / DSM 22959 / JCM 33894 / BCRC 81048 / CCUG 64013 / CIP 107961 / Muc</strain>
    </source>
</reference>
<sequence length="349" mass="37055">MKIALDVMGGDNAPDINVDGAKRALQDFPLIEKIYLVGREETVRSSCDRWGLSGPRVEIVPAAEVVEMNESGLLAVRKKKNSSMSISVDLVKSGDADAVVSAGNTGAAVAAATVKLRLLDGVERAGIVTQLPNEFGVCNVTDTGANPDAKPRHLVGYAVMASILARSVYGKQMPKVGVMSNGSEDEKGTDFTKGTFCLLKHLEERGALPFKFVGNVEGHDLFEHEIDVALTDGFTGNVLLKTCEATAKAFSKWLKEELKANPFRMVGAACASGAFRAMKARLSADSVGGSPLLGVRGVTIIAHGSSTPVAIRNALRVSMEMVQQGVNPLIEEEMARLGTIPEVAEVYPK</sequence>
<feature type="chain" id="PRO_1000116368" description="Phosphate acyltransferase">
    <location>
        <begin position="1"/>
        <end position="349"/>
    </location>
</feature>